<evidence type="ECO:0000255" key="1">
    <source>
        <dbReference type="HAMAP-Rule" id="MF_01703"/>
    </source>
</evidence>
<name>MSBA_RALN1</name>
<organism>
    <name type="scientific">Ralstonia nicotianae (strain ATCC BAA-1114 / GMI1000)</name>
    <name type="common">Ralstonia solanacearum</name>
    <dbReference type="NCBI Taxonomy" id="267608"/>
    <lineage>
        <taxon>Bacteria</taxon>
        <taxon>Pseudomonadati</taxon>
        <taxon>Pseudomonadota</taxon>
        <taxon>Betaproteobacteria</taxon>
        <taxon>Burkholderiales</taxon>
        <taxon>Burkholderiaceae</taxon>
        <taxon>Ralstonia</taxon>
        <taxon>Ralstonia solanacearum species complex</taxon>
    </lineage>
</organism>
<comment type="function">
    <text evidence="1">Involved in lipopolysaccharide (LPS) biosynthesis. Translocates lipid A-core from the inner to the outer leaflet of the inner membrane. Transmembrane domains (TMD) form a pore in the inner membrane and the ATP-binding domain (NBD) is responsible for energy generation.</text>
</comment>
<comment type="catalytic activity">
    <reaction evidence="1">
        <text>ATP + H2O + lipid A-core oligosaccharideSide 1 = ADP + phosphate + lipid A-core oligosaccharideSide 2.</text>
        <dbReference type="EC" id="7.5.2.6"/>
    </reaction>
</comment>
<comment type="subunit">
    <text evidence="1">Homodimer.</text>
</comment>
<comment type="subcellular location">
    <subcellularLocation>
        <location evidence="1">Cell inner membrane</location>
        <topology evidence="1">Multi-pass membrane protein</topology>
    </subcellularLocation>
</comment>
<comment type="domain">
    <text evidence="1">In MsbA the ATP-binding domain (NBD) and the transmembrane domain (TMD) are fused.</text>
</comment>
<comment type="similarity">
    <text evidence="1">Belongs to the ABC transporter superfamily. Lipid exporter (TC 3.A.1.106) family.</text>
</comment>
<keyword id="KW-0067">ATP-binding</keyword>
<keyword id="KW-0997">Cell inner membrane</keyword>
<keyword id="KW-1003">Cell membrane</keyword>
<keyword id="KW-0445">Lipid transport</keyword>
<keyword id="KW-0472">Membrane</keyword>
<keyword id="KW-0547">Nucleotide-binding</keyword>
<keyword id="KW-1185">Reference proteome</keyword>
<keyword id="KW-1278">Translocase</keyword>
<keyword id="KW-0812">Transmembrane</keyword>
<keyword id="KW-1133">Transmembrane helix</keyword>
<keyword id="KW-0813">Transport</keyword>
<feature type="chain" id="PRO_0000092596" description="ATP-dependent lipid A-core flippase">
    <location>
        <begin position="1"/>
        <end position="592"/>
    </location>
</feature>
<feature type="transmembrane region" description="Helical" evidence="1">
    <location>
        <begin position="31"/>
        <end position="51"/>
    </location>
</feature>
<feature type="transmembrane region" description="Helical" evidence="1">
    <location>
        <begin position="76"/>
        <end position="96"/>
    </location>
</feature>
<feature type="transmembrane region" description="Helical" evidence="1">
    <location>
        <begin position="134"/>
        <end position="154"/>
    </location>
</feature>
<feature type="transmembrane region" description="Helical" evidence="1">
    <location>
        <begin position="161"/>
        <end position="181"/>
    </location>
</feature>
<feature type="transmembrane region" description="Helical" evidence="1">
    <location>
        <begin position="261"/>
        <end position="281"/>
    </location>
</feature>
<feature type="transmembrane region" description="Helical" evidence="1">
    <location>
        <begin position="288"/>
        <end position="308"/>
    </location>
</feature>
<feature type="domain" description="ABC transmembrane type-1" evidence="1">
    <location>
        <begin position="35"/>
        <end position="317"/>
    </location>
</feature>
<feature type="domain" description="ABC transporter" evidence="1">
    <location>
        <begin position="349"/>
        <end position="587"/>
    </location>
</feature>
<feature type="binding site" evidence="1">
    <location>
        <begin position="383"/>
        <end position="390"/>
    </location>
    <ligand>
        <name>ATP</name>
        <dbReference type="ChEBI" id="CHEBI:30616"/>
    </ligand>
</feature>
<accession>Q8XXB6</accession>
<gene>
    <name evidence="1" type="primary">msbA</name>
    <name type="ordered locus">RSc2200</name>
    <name type="ORF">RS01399</name>
</gene>
<protein>
    <recommendedName>
        <fullName evidence="1">ATP-dependent lipid A-core flippase</fullName>
        <ecNumber evidence="1">7.5.2.6</ecNumber>
    </recommendedName>
    <alternativeName>
        <fullName evidence="1">Lipid A export ATP-binding/permease protein MsbA</fullName>
    </alternativeName>
</protein>
<reference key="1">
    <citation type="journal article" date="2002" name="Nature">
        <title>Genome sequence of the plant pathogen Ralstonia solanacearum.</title>
        <authorList>
            <person name="Salanoubat M."/>
            <person name="Genin S."/>
            <person name="Artiguenave F."/>
            <person name="Gouzy J."/>
            <person name="Mangenot S."/>
            <person name="Arlat M."/>
            <person name="Billault A."/>
            <person name="Brottier P."/>
            <person name="Camus J.-C."/>
            <person name="Cattolico L."/>
            <person name="Chandler M."/>
            <person name="Choisne N."/>
            <person name="Claudel-Renard C."/>
            <person name="Cunnac S."/>
            <person name="Demange N."/>
            <person name="Gaspin C."/>
            <person name="Lavie M."/>
            <person name="Moisan A."/>
            <person name="Robert C."/>
            <person name="Saurin W."/>
            <person name="Schiex T."/>
            <person name="Siguier P."/>
            <person name="Thebault P."/>
            <person name="Whalen M."/>
            <person name="Wincker P."/>
            <person name="Levy M."/>
            <person name="Weissenbach J."/>
            <person name="Boucher C.A."/>
        </authorList>
    </citation>
    <scope>NUCLEOTIDE SEQUENCE [LARGE SCALE GENOMIC DNA]</scope>
    <source>
        <strain>ATCC BAA-1114 / GMI1000</strain>
    </source>
</reference>
<proteinExistence type="inferred from homology"/>
<dbReference type="EC" id="7.5.2.6" evidence="1"/>
<dbReference type="EMBL" id="AL646052">
    <property type="protein sequence ID" value="CAD15907.1"/>
    <property type="molecule type" value="Genomic_DNA"/>
</dbReference>
<dbReference type="RefSeq" id="WP_011002128.1">
    <property type="nucleotide sequence ID" value="NC_003295.1"/>
</dbReference>
<dbReference type="SMR" id="Q8XXB6"/>
<dbReference type="STRING" id="267608.RSc2200"/>
<dbReference type="EnsemblBacteria" id="CAD15907">
    <property type="protein sequence ID" value="CAD15907"/>
    <property type="gene ID" value="RSc2200"/>
</dbReference>
<dbReference type="KEGG" id="rso:RSc2200"/>
<dbReference type="eggNOG" id="COG1132">
    <property type="taxonomic scope" value="Bacteria"/>
</dbReference>
<dbReference type="HOGENOM" id="CLU_000604_84_3_4"/>
<dbReference type="Proteomes" id="UP000001436">
    <property type="component" value="Chromosome"/>
</dbReference>
<dbReference type="GO" id="GO:0005886">
    <property type="term" value="C:plasma membrane"/>
    <property type="evidence" value="ECO:0007669"/>
    <property type="project" value="UniProtKB-SubCell"/>
</dbReference>
<dbReference type="GO" id="GO:0015421">
    <property type="term" value="F:ABC-type oligopeptide transporter activity"/>
    <property type="evidence" value="ECO:0007669"/>
    <property type="project" value="TreeGrafter"/>
</dbReference>
<dbReference type="GO" id="GO:0005524">
    <property type="term" value="F:ATP binding"/>
    <property type="evidence" value="ECO:0007669"/>
    <property type="project" value="UniProtKB-KW"/>
</dbReference>
<dbReference type="GO" id="GO:0016887">
    <property type="term" value="F:ATP hydrolysis activity"/>
    <property type="evidence" value="ECO:0007669"/>
    <property type="project" value="InterPro"/>
</dbReference>
<dbReference type="GO" id="GO:0034040">
    <property type="term" value="F:ATPase-coupled lipid transmembrane transporter activity"/>
    <property type="evidence" value="ECO:0007669"/>
    <property type="project" value="InterPro"/>
</dbReference>
<dbReference type="CDD" id="cd18552">
    <property type="entry name" value="ABC_6TM_MsbA_like"/>
    <property type="match status" value="1"/>
</dbReference>
<dbReference type="CDD" id="cd03251">
    <property type="entry name" value="ABCC_MsbA"/>
    <property type="match status" value="1"/>
</dbReference>
<dbReference type="FunFam" id="3.40.50.300:FF:000221">
    <property type="entry name" value="Multidrug ABC transporter ATP-binding protein"/>
    <property type="match status" value="1"/>
</dbReference>
<dbReference type="Gene3D" id="1.20.1560.10">
    <property type="entry name" value="ABC transporter type 1, transmembrane domain"/>
    <property type="match status" value="1"/>
</dbReference>
<dbReference type="Gene3D" id="3.40.50.300">
    <property type="entry name" value="P-loop containing nucleotide triphosphate hydrolases"/>
    <property type="match status" value="1"/>
</dbReference>
<dbReference type="InterPro" id="IPR003593">
    <property type="entry name" value="AAA+_ATPase"/>
</dbReference>
<dbReference type="InterPro" id="IPR011527">
    <property type="entry name" value="ABC1_TM_dom"/>
</dbReference>
<dbReference type="InterPro" id="IPR036640">
    <property type="entry name" value="ABC1_TM_sf"/>
</dbReference>
<dbReference type="InterPro" id="IPR003439">
    <property type="entry name" value="ABC_transporter-like_ATP-bd"/>
</dbReference>
<dbReference type="InterPro" id="IPR017871">
    <property type="entry name" value="ABC_transporter-like_CS"/>
</dbReference>
<dbReference type="InterPro" id="IPR011917">
    <property type="entry name" value="ABC_transpr_lipidA"/>
</dbReference>
<dbReference type="InterPro" id="IPR027417">
    <property type="entry name" value="P-loop_NTPase"/>
</dbReference>
<dbReference type="InterPro" id="IPR039421">
    <property type="entry name" value="Type_1_exporter"/>
</dbReference>
<dbReference type="NCBIfam" id="TIGR02203">
    <property type="entry name" value="MsbA_lipidA"/>
    <property type="match status" value="1"/>
</dbReference>
<dbReference type="PANTHER" id="PTHR43394:SF1">
    <property type="entry name" value="ATP-BINDING CASSETTE SUB-FAMILY B MEMBER 10, MITOCHONDRIAL"/>
    <property type="match status" value="1"/>
</dbReference>
<dbReference type="PANTHER" id="PTHR43394">
    <property type="entry name" value="ATP-DEPENDENT PERMEASE MDL1, MITOCHONDRIAL"/>
    <property type="match status" value="1"/>
</dbReference>
<dbReference type="Pfam" id="PF00664">
    <property type="entry name" value="ABC_membrane"/>
    <property type="match status" value="1"/>
</dbReference>
<dbReference type="Pfam" id="PF00005">
    <property type="entry name" value="ABC_tran"/>
    <property type="match status" value="1"/>
</dbReference>
<dbReference type="SMART" id="SM00382">
    <property type="entry name" value="AAA"/>
    <property type="match status" value="1"/>
</dbReference>
<dbReference type="SUPFAM" id="SSF90123">
    <property type="entry name" value="ABC transporter transmembrane region"/>
    <property type="match status" value="1"/>
</dbReference>
<dbReference type="SUPFAM" id="SSF52540">
    <property type="entry name" value="P-loop containing nucleoside triphosphate hydrolases"/>
    <property type="match status" value="1"/>
</dbReference>
<dbReference type="PROSITE" id="PS50929">
    <property type="entry name" value="ABC_TM1F"/>
    <property type="match status" value="1"/>
</dbReference>
<dbReference type="PROSITE" id="PS00211">
    <property type="entry name" value="ABC_TRANSPORTER_1"/>
    <property type="match status" value="1"/>
</dbReference>
<dbReference type="PROSITE" id="PS50893">
    <property type="entry name" value="ABC_TRANSPORTER_2"/>
    <property type="match status" value="1"/>
</dbReference>
<dbReference type="PROSITE" id="PS51239">
    <property type="entry name" value="MSBA"/>
    <property type="match status" value="1"/>
</dbReference>
<sequence length="592" mass="64521">MAVTSSSSSQPPAASQPGHFKRLWAYLRPELSSFILAMVAMGVVAATEGIIPKVVKDLLDQGFGGEYAGKLWRVPAMLVGIAVVRGVAQFGATYFLSLVSNKVLLNLRMKMFERLLQAPAAFYQRNTAASLINAVIFEVNQVLQVLTGVFITLVRDSMTVLALLIFLFYTNWRLTLVVAVILPVIGFLMSRINRRLRSLNREHQNLTNEAAYVVEEAAGGYKVVKLHGGEAYESRRFNAMTNRLRGYAMRMAVAGGLNQPVTQFLAALALSVILAIAMVQAQANQTTVGGFTGFVMAMLLLISPLKHLTDVNQPMQRGLTAAEFIFGLIDTPIEPQDGGKHIDRARGDLRFEHVTFRYGPDGRAALDSIDLHVKAGEIVALVGPSGSGKTTLVNLLPRFFEPTSGRIVLDGDALADLSLQDLRRQIAFVSQDVVLFNDTIAANVAYGARDASEIDMARVRRALEAAYLTDVVDNLPDGVDTNIGDNGSKLSGGQRQRLAIARAVYKDAPILILDEATSALDSESERQVQAALEALMQGRTTLVIAHRLSTIENADRIVVLEHGQIVEAGTHRELLDRDGLYAGLHRIQFATQ</sequence>